<proteinExistence type="inferred from homology"/>
<reference key="1">
    <citation type="journal article" date="2008" name="PLoS ONE">
        <title>Genome sequence of a lancefield group C Streptococcus zooepidemicus strain causing epidemic nephritis: new information about an old disease.</title>
        <authorList>
            <person name="Beres S.B."/>
            <person name="Sesso R."/>
            <person name="Pinto S.W.L."/>
            <person name="Hoe N.P."/>
            <person name="Porcella S.F."/>
            <person name="Deleo F.R."/>
            <person name="Musser J.M."/>
        </authorList>
    </citation>
    <scope>NUCLEOTIDE SEQUENCE [LARGE SCALE GENOMIC DNA]</scope>
    <source>
        <strain>MGCS10565</strain>
    </source>
</reference>
<protein>
    <recommendedName>
        <fullName evidence="1">Citrate lyase acyl carrier protein</fullName>
    </recommendedName>
    <alternativeName>
        <fullName evidence="1">Citrate lyase gamma chain</fullName>
    </alternativeName>
</protein>
<organism>
    <name type="scientific">Streptococcus equi subsp. zooepidemicus (strain MGCS10565)</name>
    <dbReference type="NCBI Taxonomy" id="552526"/>
    <lineage>
        <taxon>Bacteria</taxon>
        <taxon>Bacillati</taxon>
        <taxon>Bacillota</taxon>
        <taxon>Bacilli</taxon>
        <taxon>Lactobacillales</taxon>
        <taxon>Streptococcaceae</taxon>
        <taxon>Streptococcus</taxon>
    </lineage>
</organism>
<evidence type="ECO:0000255" key="1">
    <source>
        <dbReference type="HAMAP-Rule" id="MF_00805"/>
    </source>
</evidence>
<name>CITD_STREM</name>
<accession>B4U2Y3</accession>
<gene>
    <name evidence="1" type="primary">citD</name>
    <name type="ordered locus">Sez_0994</name>
</gene>
<comment type="function">
    <text evidence="1">Covalent carrier of the coenzyme of citrate lyase.</text>
</comment>
<comment type="subunit">
    <text evidence="1">Oligomer with a subunit composition of (alpha,beta,gamma)6.</text>
</comment>
<comment type="subcellular location">
    <subcellularLocation>
        <location evidence="1">Cytoplasm</location>
    </subcellularLocation>
</comment>
<comment type="similarity">
    <text evidence="1">Belongs to the CitD family.</text>
</comment>
<sequence length="102" mass="11049">MEIKQIAVAGSLESSDMMITISPNDGQGIVLELDSNVEKQFGNHIRALIKTTLARLGVESATIEAVDKGALDCTIQARTIAAVHRAAGVEHYNWKEIDSWNA</sequence>
<keyword id="KW-0963">Cytoplasm</keyword>
<keyword id="KW-0597">Phosphoprotein</keyword>
<dbReference type="EMBL" id="CP001129">
    <property type="protein sequence ID" value="ACG62350.1"/>
    <property type="molecule type" value="Genomic_DNA"/>
</dbReference>
<dbReference type="RefSeq" id="WP_012515618.1">
    <property type="nucleotide sequence ID" value="NC_011134.1"/>
</dbReference>
<dbReference type="SMR" id="B4U2Y3"/>
<dbReference type="KEGG" id="sez:Sez_0994"/>
<dbReference type="HOGENOM" id="CLU_158489_0_0_9"/>
<dbReference type="Proteomes" id="UP000001873">
    <property type="component" value="Chromosome"/>
</dbReference>
<dbReference type="GO" id="GO:0005737">
    <property type="term" value="C:cytoplasm"/>
    <property type="evidence" value="ECO:0007669"/>
    <property type="project" value="UniProtKB-SubCell"/>
</dbReference>
<dbReference type="HAMAP" id="MF_00805">
    <property type="entry name" value="CitD"/>
    <property type="match status" value="1"/>
</dbReference>
<dbReference type="InterPro" id="IPR006495">
    <property type="entry name" value="CitD"/>
</dbReference>
<dbReference type="InterPro" id="IPR023439">
    <property type="entry name" value="Mal_deCO2ase/Cit_lyase_ACP"/>
</dbReference>
<dbReference type="NCBIfam" id="TIGR01608">
    <property type="entry name" value="citD"/>
    <property type="match status" value="1"/>
</dbReference>
<dbReference type="NCBIfam" id="NF009726">
    <property type="entry name" value="PRK13253.1"/>
    <property type="match status" value="1"/>
</dbReference>
<dbReference type="Pfam" id="PF06857">
    <property type="entry name" value="ACP"/>
    <property type="match status" value="1"/>
</dbReference>
<dbReference type="PIRSF" id="PIRSF002736">
    <property type="entry name" value="Citrt_lyas_gamma"/>
    <property type="match status" value="1"/>
</dbReference>
<feature type="chain" id="PRO_1000133976" description="Citrate lyase acyl carrier protein">
    <location>
        <begin position="1"/>
        <end position="102"/>
    </location>
</feature>
<feature type="modified residue" description="O-(phosphoribosyl dephospho-coenzyme A)serine" evidence="1">
    <location>
        <position position="14"/>
    </location>
</feature>